<proteinExistence type="inferred from homology"/>
<accession>Q0HD78</accession>
<feature type="chain" id="PRO_1000053332" description="ATP synthase gamma chain">
    <location>
        <begin position="1"/>
        <end position="286"/>
    </location>
</feature>
<organism>
    <name type="scientific">Shewanella sp. (strain MR-4)</name>
    <dbReference type="NCBI Taxonomy" id="60480"/>
    <lineage>
        <taxon>Bacteria</taxon>
        <taxon>Pseudomonadati</taxon>
        <taxon>Pseudomonadota</taxon>
        <taxon>Gammaproteobacteria</taxon>
        <taxon>Alteromonadales</taxon>
        <taxon>Shewanellaceae</taxon>
        <taxon>Shewanella</taxon>
    </lineage>
</organism>
<reference key="1">
    <citation type="submission" date="2006-08" db="EMBL/GenBank/DDBJ databases">
        <title>Complete sequence of Shewanella sp. MR-4.</title>
        <authorList>
            <consortium name="US DOE Joint Genome Institute"/>
            <person name="Copeland A."/>
            <person name="Lucas S."/>
            <person name="Lapidus A."/>
            <person name="Barry K."/>
            <person name="Detter J.C."/>
            <person name="Glavina del Rio T."/>
            <person name="Hammon N."/>
            <person name="Israni S."/>
            <person name="Dalin E."/>
            <person name="Tice H."/>
            <person name="Pitluck S."/>
            <person name="Kiss H."/>
            <person name="Brettin T."/>
            <person name="Bruce D."/>
            <person name="Han C."/>
            <person name="Tapia R."/>
            <person name="Gilna P."/>
            <person name="Schmutz J."/>
            <person name="Larimer F."/>
            <person name="Land M."/>
            <person name="Hauser L."/>
            <person name="Kyrpides N."/>
            <person name="Mikhailova N."/>
            <person name="Nealson K."/>
            <person name="Konstantinidis K."/>
            <person name="Klappenbach J."/>
            <person name="Tiedje J."/>
            <person name="Richardson P."/>
        </authorList>
    </citation>
    <scope>NUCLEOTIDE SEQUENCE [LARGE SCALE GENOMIC DNA]</scope>
    <source>
        <strain>MR-4</strain>
    </source>
</reference>
<sequence length="286" mass="31481">MAGAKEIKTKIASVKNTQKITSAMEMVAASKMRRAQDRMAASRPYAESMRKVIGHVAQGSLEYKHPYLEVREAKRVGYIVVATDRGLCGGLNVNLFKKVVADVKSWKEQGAEFEFCPIGARSVQFFKSFGGQVSAHASGLGDAPKLADLIGTVRVMLDAYNEGKLDRLYVVFNKFVNTMTQTPVIEQLLPLPKSEDDEVAHRWDYIYEPDPKALLDTLLVRYVESQVYQGVVENIASEQAARMVAMKAATDNAGTLIDDLQLVYNKARQAAITQELSEIVSGASAV</sequence>
<dbReference type="EMBL" id="CP000446">
    <property type="protein sequence ID" value="ABI40989.1"/>
    <property type="molecule type" value="Genomic_DNA"/>
</dbReference>
<dbReference type="RefSeq" id="WP_011624647.1">
    <property type="nucleotide sequence ID" value="NC_008321.1"/>
</dbReference>
<dbReference type="SMR" id="Q0HD78"/>
<dbReference type="KEGG" id="she:Shewmr4_3926"/>
<dbReference type="HOGENOM" id="CLU_050669_0_1_6"/>
<dbReference type="GO" id="GO:0005886">
    <property type="term" value="C:plasma membrane"/>
    <property type="evidence" value="ECO:0007669"/>
    <property type="project" value="UniProtKB-SubCell"/>
</dbReference>
<dbReference type="GO" id="GO:0045259">
    <property type="term" value="C:proton-transporting ATP synthase complex"/>
    <property type="evidence" value="ECO:0007669"/>
    <property type="project" value="UniProtKB-KW"/>
</dbReference>
<dbReference type="GO" id="GO:0005524">
    <property type="term" value="F:ATP binding"/>
    <property type="evidence" value="ECO:0007669"/>
    <property type="project" value="UniProtKB-UniRule"/>
</dbReference>
<dbReference type="GO" id="GO:0046933">
    <property type="term" value="F:proton-transporting ATP synthase activity, rotational mechanism"/>
    <property type="evidence" value="ECO:0007669"/>
    <property type="project" value="UniProtKB-UniRule"/>
</dbReference>
<dbReference type="GO" id="GO:0042777">
    <property type="term" value="P:proton motive force-driven plasma membrane ATP synthesis"/>
    <property type="evidence" value="ECO:0007669"/>
    <property type="project" value="UniProtKB-UniRule"/>
</dbReference>
<dbReference type="CDD" id="cd12151">
    <property type="entry name" value="F1-ATPase_gamma"/>
    <property type="match status" value="1"/>
</dbReference>
<dbReference type="FunFam" id="1.10.287.80:FF:000005">
    <property type="entry name" value="ATP synthase gamma chain"/>
    <property type="match status" value="2"/>
</dbReference>
<dbReference type="FunFam" id="3.40.1380.10:FF:000001">
    <property type="entry name" value="ATP synthase gamma chain"/>
    <property type="match status" value="1"/>
</dbReference>
<dbReference type="Gene3D" id="3.40.1380.10">
    <property type="match status" value="1"/>
</dbReference>
<dbReference type="Gene3D" id="1.10.287.80">
    <property type="entry name" value="ATP synthase, gamma subunit, helix hairpin domain"/>
    <property type="match status" value="1"/>
</dbReference>
<dbReference type="HAMAP" id="MF_00815">
    <property type="entry name" value="ATP_synth_gamma_bact"/>
    <property type="match status" value="1"/>
</dbReference>
<dbReference type="InterPro" id="IPR035968">
    <property type="entry name" value="ATP_synth_F1_ATPase_gsu"/>
</dbReference>
<dbReference type="InterPro" id="IPR000131">
    <property type="entry name" value="ATP_synth_F1_gsu"/>
</dbReference>
<dbReference type="InterPro" id="IPR023632">
    <property type="entry name" value="ATP_synth_F1_gsu_CS"/>
</dbReference>
<dbReference type="NCBIfam" id="TIGR01146">
    <property type="entry name" value="ATPsyn_F1gamma"/>
    <property type="match status" value="1"/>
</dbReference>
<dbReference type="NCBIfam" id="NF004144">
    <property type="entry name" value="PRK05621.1-1"/>
    <property type="match status" value="1"/>
</dbReference>
<dbReference type="PANTHER" id="PTHR11693">
    <property type="entry name" value="ATP SYNTHASE GAMMA CHAIN"/>
    <property type="match status" value="1"/>
</dbReference>
<dbReference type="PANTHER" id="PTHR11693:SF22">
    <property type="entry name" value="ATP SYNTHASE SUBUNIT GAMMA, MITOCHONDRIAL"/>
    <property type="match status" value="1"/>
</dbReference>
<dbReference type="Pfam" id="PF00231">
    <property type="entry name" value="ATP-synt"/>
    <property type="match status" value="1"/>
</dbReference>
<dbReference type="PRINTS" id="PR00126">
    <property type="entry name" value="ATPASEGAMMA"/>
</dbReference>
<dbReference type="SUPFAM" id="SSF52943">
    <property type="entry name" value="ATP synthase (F1-ATPase), gamma subunit"/>
    <property type="match status" value="1"/>
</dbReference>
<dbReference type="PROSITE" id="PS00153">
    <property type="entry name" value="ATPASE_GAMMA"/>
    <property type="match status" value="1"/>
</dbReference>
<evidence type="ECO:0000255" key="1">
    <source>
        <dbReference type="HAMAP-Rule" id="MF_00815"/>
    </source>
</evidence>
<gene>
    <name evidence="1" type="primary">atpG</name>
    <name type="ordered locus">Shewmr4_3926</name>
</gene>
<comment type="function">
    <text evidence="1">Produces ATP from ADP in the presence of a proton gradient across the membrane. The gamma chain is believed to be important in regulating ATPase activity and the flow of protons through the CF(0) complex.</text>
</comment>
<comment type="subunit">
    <text evidence="1">F-type ATPases have 2 components, CF(1) - the catalytic core - and CF(0) - the membrane proton channel. CF(1) has five subunits: alpha(3), beta(3), gamma(1), delta(1), epsilon(1). CF(0) has three main subunits: a, b and c.</text>
</comment>
<comment type="subcellular location">
    <subcellularLocation>
        <location evidence="1">Cell inner membrane</location>
        <topology evidence="1">Peripheral membrane protein</topology>
    </subcellularLocation>
</comment>
<comment type="similarity">
    <text evidence="1">Belongs to the ATPase gamma chain family.</text>
</comment>
<keyword id="KW-0066">ATP synthesis</keyword>
<keyword id="KW-0997">Cell inner membrane</keyword>
<keyword id="KW-1003">Cell membrane</keyword>
<keyword id="KW-0139">CF(1)</keyword>
<keyword id="KW-0375">Hydrogen ion transport</keyword>
<keyword id="KW-0406">Ion transport</keyword>
<keyword id="KW-0472">Membrane</keyword>
<keyword id="KW-0813">Transport</keyword>
<protein>
    <recommendedName>
        <fullName evidence="1">ATP synthase gamma chain</fullName>
    </recommendedName>
    <alternativeName>
        <fullName evidence="1">ATP synthase F1 sector gamma subunit</fullName>
    </alternativeName>
    <alternativeName>
        <fullName evidence="1">F-ATPase gamma subunit</fullName>
    </alternativeName>
</protein>
<name>ATPG_SHESM</name>